<name>RL332_LISIN</name>
<protein>
    <recommendedName>
        <fullName evidence="1">Large ribosomal subunit protein bL33B</fullName>
    </recommendedName>
    <alternativeName>
        <fullName>50S ribosomal protein L33 2</fullName>
    </alternativeName>
</protein>
<sequence>MKKKTSLACSECGSRNYTVNVSGTQKETRLEVKKFCRHCNKHTLHRETK</sequence>
<dbReference type="EMBL" id="AL596164">
    <property type="protein sequence ID" value="CAC95509.1"/>
    <property type="molecule type" value="Genomic_DNA"/>
</dbReference>
<dbReference type="PIR" id="AE1467">
    <property type="entry name" value="AE1467"/>
</dbReference>
<dbReference type="SMR" id="P66222"/>
<dbReference type="STRING" id="272626.gene:17564603"/>
<dbReference type="KEGG" id="lin:lin0276"/>
<dbReference type="eggNOG" id="COG0267">
    <property type="taxonomic scope" value="Bacteria"/>
</dbReference>
<dbReference type="HOGENOM" id="CLU_190949_0_1_9"/>
<dbReference type="OrthoDB" id="9801333at2"/>
<dbReference type="Proteomes" id="UP000002513">
    <property type="component" value="Chromosome"/>
</dbReference>
<dbReference type="GO" id="GO:0005737">
    <property type="term" value="C:cytoplasm"/>
    <property type="evidence" value="ECO:0007669"/>
    <property type="project" value="UniProtKB-ARBA"/>
</dbReference>
<dbReference type="GO" id="GO:1990904">
    <property type="term" value="C:ribonucleoprotein complex"/>
    <property type="evidence" value="ECO:0007669"/>
    <property type="project" value="UniProtKB-KW"/>
</dbReference>
<dbReference type="GO" id="GO:0005840">
    <property type="term" value="C:ribosome"/>
    <property type="evidence" value="ECO:0007669"/>
    <property type="project" value="UniProtKB-KW"/>
</dbReference>
<dbReference type="GO" id="GO:0003735">
    <property type="term" value="F:structural constituent of ribosome"/>
    <property type="evidence" value="ECO:0007669"/>
    <property type="project" value="InterPro"/>
</dbReference>
<dbReference type="GO" id="GO:0006412">
    <property type="term" value="P:translation"/>
    <property type="evidence" value="ECO:0007669"/>
    <property type="project" value="UniProtKB-UniRule"/>
</dbReference>
<dbReference type="Gene3D" id="2.20.28.120">
    <property type="entry name" value="Ribosomal protein L33"/>
    <property type="match status" value="1"/>
</dbReference>
<dbReference type="HAMAP" id="MF_00294">
    <property type="entry name" value="Ribosomal_bL33"/>
    <property type="match status" value="1"/>
</dbReference>
<dbReference type="InterPro" id="IPR001705">
    <property type="entry name" value="Ribosomal_bL33"/>
</dbReference>
<dbReference type="InterPro" id="IPR038584">
    <property type="entry name" value="Ribosomal_bL33_sf"/>
</dbReference>
<dbReference type="InterPro" id="IPR011332">
    <property type="entry name" value="Ribosomal_zn-bd"/>
</dbReference>
<dbReference type="NCBIfam" id="NF001764">
    <property type="entry name" value="PRK00504.1"/>
    <property type="match status" value="1"/>
</dbReference>
<dbReference type="NCBIfam" id="TIGR01023">
    <property type="entry name" value="rpmG_bact"/>
    <property type="match status" value="1"/>
</dbReference>
<dbReference type="Pfam" id="PF00471">
    <property type="entry name" value="Ribosomal_L33"/>
    <property type="match status" value="1"/>
</dbReference>
<dbReference type="SUPFAM" id="SSF57829">
    <property type="entry name" value="Zn-binding ribosomal proteins"/>
    <property type="match status" value="1"/>
</dbReference>
<comment type="similarity">
    <text evidence="2">Belongs to the bacterial ribosomal protein bL33 family.</text>
</comment>
<gene>
    <name type="primary">rpmG2</name>
    <name type="ordered locus">lin0276</name>
</gene>
<reference key="1">
    <citation type="journal article" date="2001" name="Science">
        <title>Comparative genomics of Listeria species.</title>
        <authorList>
            <person name="Glaser P."/>
            <person name="Frangeul L."/>
            <person name="Buchrieser C."/>
            <person name="Rusniok C."/>
            <person name="Amend A."/>
            <person name="Baquero F."/>
            <person name="Berche P."/>
            <person name="Bloecker H."/>
            <person name="Brandt P."/>
            <person name="Chakraborty T."/>
            <person name="Charbit A."/>
            <person name="Chetouani F."/>
            <person name="Couve E."/>
            <person name="de Daruvar A."/>
            <person name="Dehoux P."/>
            <person name="Domann E."/>
            <person name="Dominguez-Bernal G."/>
            <person name="Duchaud E."/>
            <person name="Durant L."/>
            <person name="Dussurget O."/>
            <person name="Entian K.-D."/>
            <person name="Fsihi H."/>
            <person name="Garcia-del Portillo F."/>
            <person name="Garrido P."/>
            <person name="Gautier L."/>
            <person name="Goebel W."/>
            <person name="Gomez-Lopez N."/>
            <person name="Hain T."/>
            <person name="Hauf J."/>
            <person name="Jackson D."/>
            <person name="Jones L.-M."/>
            <person name="Kaerst U."/>
            <person name="Kreft J."/>
            <person name="Kuhn M."/>
            <person name="Kunst F."/>
            <person name="Kurapkat G."/>
            <person name="Madueno E."/>
            <person name="Maitournam A."/>
            <person name="Mata Vicente J."/>
            <person name="Ng E."/>
            <person name="Nedjari H."/>
            <person name="Nordsiek G."/>
            <person name="Novella S."/>
            <person name="de Pablos B."/>
            <person name="Perez-Diaz J.-C."/>
            <person name="Purcell R."/>
            <person name="Remmel B."/>
            <person name="Rose M."/>
            <person name="Schlueter T."/>
            <person name="Simoes N."/>
            <person name="Tierrez A."/>
            <person name="Vazquez-Boland J.-A."/>
            <person name="Voss H."/>
            <person name="Wehland J."/>
            <person name="Cossart P."/>
        </authorList>
    </citation>
    <scope>NUCLEOTIDE SEQUENCE [LARGE SCALE GENOMIC DNA]</scope>
    <source>
        <strain>ATCC BAA-680 / CLIP 11262</strain>
    </source>
</reference>
<proteinExistence type="inferred from homology"/>
<feature type="chain" id="PRO_0000170178" description="Large ribosomal subunit protein bL33B">
    <location>
        <begin position="1"/>
        <end position="49"/>
    </location>
</feature>
<accession>P66222</accession>
<accession>Q92F31</accession>
<evidence type="ECO:0000255" key="1">
    <source>
        <dbReference type="HAMAP-Rule" id="MF_00294"/>
    </source>
</evidence>
<evidence type="ECO:0000305" key="2"/>
<keyword id="KW-0687">Ribonucleoprotein</keyword>
<keyword id="KW-0689">Ribosomal protein</keyword>
<organism>
    <name type="scientific">Listeria innocua serovar 6a (strain ATCC BAA-680 / CLIP 11262)</name>
    <dbReference type="NCBI Taxonomy" id="272626"/>
    <lineage>
        <taxon>Bacteria</taxon>
        <taxon>Bacillati</taxon>
        <taxon>Bacillota</taxon>
        <taxon>Bacilli</taxon>
        <taxon>Bacillales</taxon>
        <taxon>Listeriaceae</taxon>
        <taxon>Listeria</taxon>
    </lineage>
</organism>